<protein>
    <recommendedName>
        <fullName evidence="1">Cell division topological specificity factor</fullName>
    </recommendedName>
</protein>
<evidence type="ECO:0000255" key="1">
    <source>
        <dbReference type="HAMAP-Rule" id="MF_00262"/>
    </source>
</evidence>
<organism>
    <name type="scientific">Psychrobacter cryohalolentis (strain ATCC BAA-1226 / DSM 17306 / VKM B-2378 / K5)</name>
    <dbReference type="NCBI Taxonomy" id="335284"/>
    <lineage>
        <taxon>Bacteria</taxon>
        <taxon>Pseudomonadati</taxon>
        <taxon>Pseudomonadota</taxon>
        <taxon>Gammaproteobacteria</taxon>
        <taxon>Moraxellales</taxon>
        <taxon>Moraxellaceae</taxon>
        <taxon>Psychrobacter</taxon>
    </lineage>
</organism>
<dbReference type="EMBL" id="CP000323">
    <property type="protein sequence ID" value="ABE75869.1"/>
    <property type="molecule type" value="Genomic_DNA"/>
</dbReference>
<dbReference type="RefSeq" id="WP_011514407.1">
    <property type="nucleotide sequence ID" value="NC_007969.1"/>
</dbReference>
<dbReference type="SMR" id="Q1Q8Y4"/>
<dbReference type="STRING" id="335284.Pcryo_2092"/>
<dbReference type="KEGG" id="pcr:Pcryo_2092"/>
<dbReference type="eggNOG" id="COG0851">
    <property type="taxonomic scope" value="Bacteria"/>
</dbReference>
<dbReference type="HOGENOM" id="CLU_137929_2_3_6"/>
<dbReference type="Proteomes" id="UP000002425">
    <property type="component" value="Chromosome"/>
</dbReference>
<dbReference type="GO" id="GO:0051301">
    <property type="term" value="P:cell division"/>
    <property type="evidence" value="ECO:0007669"/>
    <property type="project" value="UniProtKB-KW"/>
</dbReference>
<dbReference type="GO" id="GO:0032955">
    <property type="term" value="P:regulation of division septum assembly"/>
    <property type="evidence" value="ECO:0007669"/>
    <property type="project" value="InterPro"/>
</dbReference>
<dbReference type="Gene3D" id="3.30.1070.10">
    <property type="entry name" value="Cell division topological specificity factor MinE"/>
    <property type="match status" value="1"/>
</dbReference>
<dbReference type="HAMAP" id="MF_00262">
    <property type="entry name" value="MinE"/>
    <property type="match status" value="1"/>
</dbReference>
<dbReference type="InterPro" id="IPR005527">
    <property type="entry name" value="MinE"/>
</dbReference>
<dbReference type="InterPro" id="IPR036707">
    <property type="entry name" value="MinE_sf"/>
</dbReference>
<dbReference type="NCBIfam" id="TIGR01215">
    <property type="entry name" value="minE"/>
    <property type="match status" value="1"/>
</dbReference>
<dbReference type="NCBIfam" id="NF001422">
    <property type="entry name" value="PRK00296.1"/>
    <property type="match status" value="1"/>
</dbReference>
<dbReference type="Pfam" id="PF03776">
    <property type="entry name" value="MinE"/>
    <property type="match status" value="1"/>
</dbReference>
<dbReference type="SUPFAM" id="SSF55229">
    <property type="entry name" value="Cell division protein MinE topological specificity domain"/>
    <property type="match status" value="1"/>
</dbReference>
<accession>Q1Q8Y4</accession>
<sequence length="95" mass="10831">MSKKKGFWSSLFGTDDSNAGSANMATERLKVIVASENRLNNRLTADRIEKMKREILEVVNKYVNGVQIDDVNINHRSEDSLDVLEMNINLPEHKK</sequence>
<feature type="chain" id="PRO_0000298167" description="Cell division topological specificity factor">
    <location>
        <begin position="1"/>
        <end position="95"/>
    </location>
</feature>
<proteinExistence type="inferred from homology"/>
<name>MINE_PSYCK</name>
<gene>
    <name evidence="1" type="primary">minE</name>
    <name type="ordered locus">Pcryo_2092</name>
</gene>
<keyword id="KW-0131">Cell cycle</keyword>
<keyword id="KW-0132">Cell division</keyword>
<comment type="function">
    <text evidence="1">Prevents the cell division inhibition by proteins MinC and MinD at internal division sites while permitting inhibition at polar sites. This ensures cell division at the proper site by restricting the formation of a division septum at the midpoint of the long axis of the cell.</text>
</comment>
<comment type="similarity">
    <text evidence="1">Belongs to the MinE family.</text>
</comment>
<reference key="1">
    <citation type="submission" date="2006-03" db="EMBL/GenBank/DDBJ databases">
        <title>Complete sequence of chromosome of Psychrobacter cryohalolentis K5.</title>
        <authorList>
            <consortium name="US DOE Joint Genome Institute"/>
            <person name="Copeland A."/>
            <person name="Lucas S."/>
            <person name="Lapidus A."/>
            <person name="Barry K."/>
            <person name="Detter J.C."/>
            <person name="Glavina T."/>
            <person name="Hammon N."/>
            <person name="Israni S."/>
            <person name="Dalin E."/>
            <person name="Tice H."/>
            <person name="Pitluck S."/>
            <person name="Brettin T."/>
            <person name="Bruce D."/>
            <person name="Han C."/>
            <person name="Tapia R."/>
            <person name="Sims D.R."/>
            <person name="Gilna P."/>
            <person name="Schmutz J."/>
            <person name="Larimer F."/>
            <person name="Land M."/>
            <person name="Hauser L."/>
            <person name="Kyrpides N."/>
            <person name="Kim E."/>
            <person name="Richardson P."/>
        </authorList>
    </citation>
    <scope>NUCLEOTIDE SEQUENCE [LARGE SCALE GENOMIC DNA]</scope>
    <source>
        <strain>ATCC BAA-1226 / DSM 17306 / VKM B-2378 / K5</strain>
    </source>
</reference>